<protein>
    <recommendedName>
        <fullName evidence="1">Small ribosomal subunit protein uS14</fullName>
    </recommendedName>
    <alternativeName>
        <fullName evidence="2">30S ribosomal protein S14 type Z</fullName>
    </alternativeName>
</protein>
<gene>
    <name evidence="1" type="primary">rpsZ</name>
    <name evidence="1" type="synonym">rpsN</name>
    <name type="ordered locus">NIS_0236</name>
</gene>
<name>RS14Z_NITSB</name>
<dbReference type="EMBL" id="AP009178">
    <property type="protein sequence ID" value="BAF69350.1"/>
    <property type="molecule type" value="Genomic_DNA"/>
</dbReference>
<dbReference type="RefSeq" id="WP_012081613.1">
    <property type="nucleotide sequence ID" value="NC_009662.1"/>
</dbReference>
<dbReference type="SMR" id="A6Q1J1"/>
<dbReference type="STRING" id="387092.NIS_0236"/>
<dbReference type="KEGG" id="nis:NIS_0236"/>
<dbReference type="eggNOG" id="COG0199">
    <property type="taxonomic scope" value="Bacteria"/>
</dbReference>
<dbReference type="HOGENOM" id="CLU_139869_3_0_7"/>
<dbReference type="InParanoid" id="A6Q1J1"/>
<dbReference type="OrthoDB" id="9810484at2"/>
<dbReference type="Proteomes" id="UP000001118">
    <property type="component" value="Chromosome"/>
</dbReference>
<dbReference type="GO" id="GO:0005737">
    <property type="term" value="C:cytoplasm"/>
    <property type="evidence" value="ECO:0007669"/>
    <property type="project" value="UniProtKB-ARBA"/>
</dbReference>
<dbReference type="GO" id="GO:0015935">
    <property type="term" value="C:small ribosomal subunit"/>
    <property type="evidence" value="ECO:0007669"/>
    <property type="project" value="TreeGrafter"/>
</dbReference>
<dbReference type="GO" id="GO:0019843">
    <property type="term" value="F:rRNA binding"/>
    <property type="evidence" value="ECO:0007669"/>
    <property type="project" value="UniProtKB-UniRule"/>
</dbReference>
<dbReference type="GO" id="GO:0003735">
    <property type="term" value="F:structural constituent of ribosome"/>
    <property type="evidence" value="ECO:0007669"/>
    <property type="project" value="InterPro"/>
</dbReference>
<dbReference type="GO" id="GO:0008270">
    <property type="term" value="F:zinc ion binding"/>
    <property type="evidence" value="ECO:0007669"/>
    <property type="project" value="UniProtKB-UniRule"/>
</dbReference>
<dbReference type="GO" id="GO:0006412">
    <property type="term" value="P:translation"/>
    <property type="evidence" value="ECO:0007669"/>
    <property type="project" value="UniProtKB-UniRule"/>
</dbReference>
<dbReference type="FunFam" id="4.10.830.10:FF:000001">
    <property type="entry name" value="30S ribosomal protein S14 type Z"/>
    <property type="match status" value="1"/>
</dbReference>
<dbReference type="Gene3D" id="4.10.830.10">
    <property type="entry name" value="30s Ribosomal Protein S14, Chain N"/>
    <property type="match status" value="1"/>
</dbReference>
<dbReference type="HAMAP" id="MF_01364_B">
    <property type="entry name" value="Ribosomal_uS14_2_B"/>
    <property type="match status" value="1"/>
</dbReference>
<dbReference type="InterPro" id="IPR001209">
    <property type="entry name" value="Ribosomal_uS14"/>
</dbReference>
<dbReference type="InterPro" id="IPR023053">
    <property type="entry name" value="Ribosomal_uS14_bact"/>
</dbReference>
<dbReference type="InterPro" id="IPR018271">
    <property type="entry name" value="Ribosomal_uS14_CS"/>
</dbReference>
<dbReference type="InterPro" id="IPR043140">
    <property type="entry name" value="Ribosomal_uS14_sf"/>
</dbReference>
<dbReference type="NCBIfam" id="NF005974">
    <property type="entry name" value="PRK08061.1"/>
    <property type="match status" value="1"/>
</dbReference>
<dbReference type="PANTHER" id="PTHR19836">
    <property type="entry name" value="30S RIBOSOMAL PROTEIN S14"/>
    <property type="match status" value="1"/>
</dbReference>
<dbReference type="PANTHER" id="PTHR19836:SF19">
    <property type="entry name" value="SMALL RIBOSOMAL SUBUNIT PROTEIN US14M"/>
    <property type="match status" value="1"/>
</dbReference>
<dbReference type="Pfam" id="PF00253">
    <property type="entry name" value="Ribosomal_S14"/>
    <property type="match status" value="1"/>
</dbReference>
<dbReference type="SUPFAM" id="SSF57716">
    <property type="entry name" value="Glucocorticoid receptor-like (DNA-binding domain)"/>
    <property type="match status" value="1"/>
</dbReference>
<dbReference type="PROSITE" id="PS00527">
    <property type="entry name" value="RIBOSOMAL_S14"/>
    <property type="match status" value="1"/>
</dbReference>
<reference key="1">
    <citation type="journal article" date="2007" name="Proc. Natl. Acad. Sci. U.S.A.">
        <title>Deep-sea vent epsilon-proteobacterial genomes provide insights into emergence of pathogens.</title>
        <authorList>
            <person name="Nakagawa S."/>
            <person name="Takaki Y."/>
            <person name="Shimamura S."/>
            <person name="Reysenbach A.-L."/>
            <person name="Takai K."/>
            <person name="Horikoshi K."/>
        </authorList>
    </citation>
    <scope>NUCLEOTIDE SEQUENCE [LARGE SCALE GENOMIC DNA]</scope>
    <source>
        <strain>SB155-2</strain>
    </source>
</reference>
<sequence>MAKKSMIAKAKRKPKFKVRAYTRCRICGRPKSVYRDFGLCRICLRKMANEGLLPGVKKASW</sequence>
<evidence type="ECO:0000255" key="1">
    <source>
        <dbReference type="HAMAP-Rule" id="MF_01364"/>
    </source>
</evidence>
<evidence type="ECO:0000305" key="2"/>
<proteinExistence type="inferred from homology"/>
<comment type="function">
    <text evidence="1">Binds 16S rRNA, required for the assembly of 30S particles and may also be responsible for determining the conformation of the 16S rRNA at the A site.</text>
</comment>
<comment type="cofactor">
    <cofactor evidence="1">
        <name>Zn(2+)</name>
        <dbReference type="ChEBI" id="CHEBI:29105"/>
    </cofactor>
    <text evidence="1">Binds 1 zinc ion per subunit.</text>
</comment>
<comment type="subunit">
    <text evidence="1">Part of the 30S ribosomal subunit. Contacts proteins S3 and S10.</text>
</comment>
<comment type="similarity">
    <text evidence="1">Belongs to the universal ribosomal protein uS14 family. Zinc-binding uS14 subfamily.</text>
</comment>
<feature type="chain" id="PRO_1000067959" description="Small ribosomal subunit protein uS14">
    <location>
        <begin position="1"/>
        <end position="61"/>
    </location>
</feature>
<feature type="binding site" evidence="1">
    <location>
        <position position="24"/>
    </location>
    <ligand>
        <name>Zn(2+)</name>
        <dbReference type="ChEBI" id="CHEBI:29105"/>
    </ligand>
</feature>
<feature type="binding site" evidence="1">
    <location>
        <position position="27"/>
    </location>
    <ligand>
        <name>Zn(2+)</name>
        <dbReference type="ChEBI" id="CHEBI:29105"/>
    </ligand>
</feature>
<feature type="binding site" evidence="1">
    <location>
        <position position="40"/>
    </location>
    <ligand>
        <name>Zn(2+)</name>
        <dbReference type="ChEBI" id="CHEBI:29105"/>
    </ligand>
</feature>
<feature type="binding site" evidence="1">
    <location>
        <position position="43"/>
    </location>
    <ligand>
        <name>Zn(2+)</name>
        <dbReference type="ChEBI" id="CHEBI:29105"/>
    </ligand>
</feature>
<keyword id="KW-0479">Metal-binding</keyword>
<keyword id="KW-1185">Reference proteome</keyword>
<keyword id="KW-0687">Ribonucleoprotein</keyword>
<keyword id="KW-0689">Ribosomal protein</keyword>
<keyword id="KW-0694">RNA-binding</keyword>
<keyword id="KW-0699">rRNA-binding</keyword>
<keyword id="KW-0862">Zinc</keyword>
<accession>A6Q1J1</accession>
<organism>
    <name type="scientific">Nitratiruptor sp. (strain SB155-2)</name>
    <dbReference type="NCBI Taxonomy" id="387092"/>
    <lineage>
        <taxon>Bacteria</taxon>
        <taxon>Pseudomonadati</taxon>
        <taxon>Campylobacterota</taxon>
        <taxon>Epsilonproteobacteria</taxon>
        <taxon>Nautiliales</taxon>
        <taxon>Nitratiruptoraceae</taxon>
        <taxon>Nitratiruptor</taxon>
    </lineage>
</organism>